<reference key="1">
    <citation type="journal article" date="2005" name="Nucleic Acids Res.">
        <title>Genomic blueprint of Hahella chejuensis, a marine microbe producing an algicidal agent.</title>
        <authorList>
            <person name="Jeong H."/>
            <person name="Yim J.H."/>
            <person name="Lee C."/>
            <person name="Choi S.-H."/>
            <person name="Park Y.K."/>
            <person name="Yoon S.H."/>
            <person name="Hur C.-G."/>
            <person name="Kang H.-Y."/>
            <person name="Kim D."/>
            <person name="Lee H.H."/>
            <person name="Park K.H."/>
            <person name="Park S.-H."/>
            <person name="Park H.-S."/>
            <person name="Lee H.K."/>
            <person name="Oh T.K."/>
            <person name="Kim J.F."/>
        </authorList>
    </citation>
    <scope>NUCLEOTIDE SEQUENCE [LARGE SCALE GENOMIC DNA]</scope>
    <source>
        <strain>KCTC 2396</strain>
    </source>
</reference>
<comment type="function">
    <text evidence="1">Functions in the N-end rule pathway of protein degradation where it conjugates Leu from its aminoacyl-tRNA to the N-termini of proteins containing an N-terminal aspartate or glutamate.</text>
</comment>
<comment type="catalytic activity">
    <reaction evidence="1">
        <text>N-terminal L-glutamyl-[protein] + L-leucyl-tRNA(Leu) = N-terminal L-leucyl-L-glutamyl-[protein] + tRNA(Leu) + H(+)</text>
        <dbReference type="Rhea" id="RHEA:50412"/>
        <dbReference type="Rhea" id="RHEA-COMP:9613"/>
        <dbReference type="Rhea" id="RHEA-COMP:9622"/>
        <dbReference type="Rhea" id="RHEA-COMP:12664"/>
        <dbReference type="Rhea" id="RHEA-COMP:12668"/>
        <dbReference type="ChEBI" id="CHEBI:15378"/>
        <dbReference type="ChEBI" id="CHEBI:64721"/>
        <dbReference type="ChEBI" id="CHEBI:78442"/>
        <dbReference type="ChEBI" id="CHEBI:78494"/>
        <dbReference type="ChEBI" id="CHEBI:133041"/>
        <dbReference type="EC" id="2.3.2.29"/>
    </reaction>
</comment>
<comment type="catalytic activity">
    <reaction evidence="1">
        <text>N-terminal L-aspartyl-[protein] + L-leucyl-tRNA(Leu) = N-terminal L-leucyl-L-aspartyl-[protein] + tRNA(Leu) + H(+)</text>
        <dbReference type="Rhea" id="RHEA:50420"/>
        <dbReference type="Rhea" id="RHEA-COMP:9613"/>
        <dbReference type="Rhea" id="RHEA-COMP:9622"/>
        <dbReference type="Rhea" id="RHEA-COMP:12669"/>
        <dbReference type="Rhea" id="RHEA-COMP:12674"/>
        <dbReference type="ChEBI" id="CHEBI:15378"/>
        <dbReference type="ChEBI" id="CHEBI:64720"/>
        <dbReference type="ChEBI" id="CHEBI:78442"/>
        <dbReference type="ChEBI" id="CHEBI:78494"/>
        <dbReference type="ChEBI" id="CHEBI:133042"/>
        <dbReference type="EC" id="2.3.2.29"/>
    </reaction>
</comment>
<comment type="subcellular location">
    <subcellularLocation>
        <location evidence="1">Cytoplasm</location>
    </subcellularLocation>
</comment>
<comment type="similarity">
    <text evidence="1">Belongs to the R-transferase family. Bpt subfamily.</text>
</comment>
<name>BPT_HAHCH</name>
<accession>Q2SJK9</accession>
<keyword id="KW-0012">Acyltransferase</keyword>
<keyword id="KW-0963">Cytoplasm</keyword>
<keyword id="KW-1185">Reference proteome</keyword>
<keyword id="KW-0808">Transferase</keyword>
<dbReference type="EC" id="2.3.2.29" evidence="1"/>
<dbReference type="EMBL" id="CP000155">
    <property type="protein sequence ID" value="ABC29165.1"/>
    <property type="molecule type" value="Genomic_DNA"/>
</dbReference>
<dbReference type="RefSeq" id="WP_011396234.1">
    <property type="nucleotide sequence ID" value="NC_007645.1"/>
</dbReference>
<dbReference type="SMR" id="Q2SJK9"/>
<dbReference type="STRING" id="349521.HCH_02342"/>
<dbReference type="KEGG" id="hch:HCH_02342"/>
<dbReference type="eggNOG" id="COG2935">
    <property type="taxonomic scope" value="Bacteria"/>
</dbReference>
<dbReference type="HOGENOM" id="CLU_077607_0_0_6"/>
<dbReference type="OrthoDB" id="9782022at2"/>
<dbReference type="Proteomes" id="UP000000238">
    <property type="component" value="Chromosome"/>
</dbReference>
<dbReference type="GO" id="GO:0005737">
    <property type="term" value="C:cytoplasm"/>
    <property type="evidence" value="ECO:0007669"/>
    <property type="project" value="UniProtKB-SubCell"/>
</dbReference>
<dbReference type="GO" id="GO:0004057">
    <property type="term" value="F:arginyl-tRNA--protein transferase activity"/>
    <property type="evidence" value="ECO:0007669"/>
    <property type="project" value="InterPro"/>
</dbReference>
<dbReference type="GO" id="GO:0008914">
    <property type="term" value="F:leucyl-tRNA--protein transferase activity"/>
    <property type="evidence" value="ECO:0007669"/>
    <property type="project" value="UniProtKB-UniRule"/>
</dbReference>
<dbReference type="GO" id="GO:0071596">
    <property type="term" value="P:ubiquitin-dependent protein catabolic process via the N-end rule pathway"/>
    <property type="evidence" value="ECO:0007669"/>
    <property type="project" value="InterPro"/>
</dbReference>
<dbReference type="HAMAP" id="MF_00689">
    <property type="entry name" value="Bpt"/>
    <property type="match status" value="1"/>
</dbReference>
<dbReference type="InterPro" id="IPR016181">
    <property type="entry name" value="Acyl_CoA_acyltransferase"/>
</dbReference>
<dbReference type="InterPro" id="IPR017138">
    <property type="entry name" value="Asp_Glu_LeuTrfase"/>
</dbReference>
<dbReference type="InterPro" id="IPR030700">
    <property type="entry name" value="N-end_Aminoacyl_Trfase"/>
</dbReference>
<dbReference type="InterPro" id="IPR007472">
    <property type="entry name" value="N-end_Aminoacyl_Trfase_C"/>
</dbReference>
<dbReference type="InterPro" id="IPR007471">
    <property type="entry name" value="N-end_Aminoacyl_Trfase_N"/>
</dbReference>
<dbReference type="NCBIfam" id="NF002341">
    <property type="entry name" value="PRK01305.1-1"/>
    <property type="match status" value="1"/>
</dbReference>
<dbReference type="NCBIfam" id="NF002342">
    <property type="entry name" value="PRK01305.1-3"/>
    <property type="match status" value="1"/>
</dbReference>
<dbReference type="NCBIfam" id="NF002345">
    <property type="entry name" value="PRK01305.2-2"/>
    <property type="match status" value="1"/>
</dbReference>
<dbReference type="NCBIfam" id="NF002346">
    <property type="entry name" value="PRK01305.2-3"/>
    <property type="match status" value="1"/>
</dbReference>
<dbReference type="PANTHER" id="PTHR21367">
    <property type="entry name" value="ARGININE-TRNA-PROTEIN TRANSFERASE 1"/>
    <property type="match status" value="1"/>
</dbReference>
<dbReference type="PANTHER" id="PTHR21367:SF1">
    <property type="entry name" value="ARGINYL-TRNA--PROTEIN TRANSFERASE 1"/>
    <property type="match status" value="1"/>
</dbReference>
<dbReference type="Pfam" id="PF04377">
    <property type="entry name" value="ATE_C"/>
    <property type="match status" value="1"/>
</dbReference>
<dbReference type="Pfam" id="PF04376">
    <property type="entry name" value="ATE_N"/>
    <property type="match status" value="1"/>
</dbReference>
<dbReference type="PIRSF" id="PIRSF037208">
    <property type="entry name" value="ATE_pro_prd"/>
    <property type="match status" value="1"/>
</dbReference>
<dbReference type="SUPFAM" id="SSF55729">
    <property type="entry name" value="Acyl-CoA N-acyltransferases (Nat)"/>
    <property type="match status" value="1"/>
</dbReference>
<organism>
    <name type="scientific">Hahella chejuensis (strain KCTC 2396)</name>
    <dbReference type="NCBI Taxonomy" id="349521"/>
    <lineage>
        <taxon>Bacteria</taxon>
        <taxon>Pseudomonadati</taxon>
        <taxon>Pseudomonadota</taxon>
        <taxon>Gammaproteobacteria</taxon>
        <taxon>Oceanospirillales</taxon>
        <taxon>Hahellaceae</taxon>
        <taxon>Hahella</taxon>
    </lineage>
</organism>
<protein>
    <recommendedName>
        <fullName evidence="1">Aspartate/glutamate leucyltransferase</fullName>
        <ecNumber evidence="1">2.3.2.29</ecNumber>
    </recommendedName>
</protein>
<evidence type="ECO:0000255" key="1">
    <source>
        <dbReference type="HAMAP-Rule" id="MF_00689"/>
    </source>
</evidence>
<proteinExistence type="inferred from homology"/>
<gene>
    <name evidence="1" type="primary">bpt</name>
    <name type="ordered locus">HCH_02342</name>
</gene>
<sequence>MSNLRTLVFYATPEHPCSYLDDRLATTMFVDPKADINLDLYTRLSQLGFRRSGNHYYKPRCNGCNACIAVRIPTEEFNRTRSQERTWKRNSDLTVRLRSAQFEQEHFALYQRYISARHQDGDMYPPTLDQYESFLLEARSETLFIEFRKDSKLLAIAVTDRTTDGLSAIYTFFDPNEDKRALGVYAILWQLQFAREQRLPYLYLGYWIRGCRKMSYKTNYRPIQVLVRDSWITI</sequence>
<feature type="chain" id="PRO_0000263187" description="Aspartate/glutamate leucyltransferase">
    <location>
        <begin position="1"/>
        <end position="234"/>
    </location>
</feature>